<feature type="chain" id="PRO_0000171443" description="Putative signal peptide peptidase SppA">
    <location>
        <begin position="1"/>
        <end position="344"/>
    </location>
</feature>
<feature type="transmembrane region" description="Helical" evidence="2">
    <location>
        <begin position="6"/>
        <end position="26"/>
    </location>
</feature>
<feature type="active site" description="Nucleophile" evidence="1">
    <location>
        <position position="150"/>
    </location>
</feature>
<feature type="active site" description="Proton donor/acceptor" evidence="1">
    <location>
        <position position="202"/>
    </location>
</feature>
<accession>Q9X480</accession>
<organism>
    <name type="scientific">Enterococcus faecium</name>
    <name type="common">Streptococcus faecium</name>
    <dbReference type="NCBI Taxonomy" id="1352"/>
    <lineage>
        <taxon>Bacteria</taxon>
        <taxon>Bacillati</taxon>
        <taxon>Bacillota</taxon>
        <taxon>Bacilli</taxon>
        <taxon>Lactobacillales</taxon>
        <taxon>Enterococcaceae</taxon>
        <taxon>Enterococcus</taxon>
    </lineage>
</organism>
<gene>
    <name type="primary">sppA</name>
</gene>
<proteinExistence type="inferred from homology"/>
<name>SPPA_ENTFC</name>
<evidence type="ECO:0000250" key="1"/>
<evidence type="ECO:0000255" key="2"/>
<evidence type="ECO:0000305" key="3"/>
<keyword id="KW-1003">Cell membrane</keyword>
<keyword id="KW-0378">Hydrolase</keyword>
<keyword id="KW-0472">Membrane</keyword>
<keyword id="KW-0645">Protease</keyword>
<keyword id="KW-0720">Serine protease</keyword>
<keyword id="KW-0812">Transmembrane</keyword>
<keyword id="KW-1133">Transmembrane helix</keyword>
<sequence length="344" mass="37543">MNKRRWIAVGVACGLLLLSIIVALIPGKDKEEASNTTLTGINKIFYGSNEITEETLEEGASNKKIVKLSVNGVIADTGESNLFSREQYNHQNFLTQLKKIQEDKAVKGVLLEVNSPGGGIYESAEIAKEMAKIKKLDIPIYTAFKNTAASGGYYISAGSDKIFATEETTTGSIGVIISGLNYSGLLEKLGVTDATYKSGALKDMMSPQHKPSEEENKVIQEFVMSAYDRFVNVVAKGRNMDTNAVKELADGRIYDGNQAVENGLVDQIGYSEDALDSLKKEKKLTDATVIEYKNDTTGFASSWLGNKIAEWQGLKATTSDRVISVFEKLGFSDTPKPMYYYGGL</sequence>
<reference key="1">
    <citation type="journal article" date="1999" name="Appl. Environ. Microbiol.">
        <title>Characterization and heterologous expression of the genes encoding enterocin A production, immunity, and regulation in Enterococcus faecium DPC1146.</title>
        <authorList>
            <person name="O'Keeffe T."/>
            <person name="Hill C."/>
            <person name="Ross R.P."/>
        </authorList>
    </citation>
    <scope>NUCLEOTIDE SEQUENCE [GENOMIC DNA]</scope>
    <source>
        <strain>DPC1146</strain>
    </source>
</reference>
<dbReference type="EC" id="3.4.21.-"/>
<dbReference type="EMBL" id="AF099088">
    <property type="protein sequence ID" value="AAD29142.1"/>
    <property type="molecule type" value="Genomic_DNA"/>
</dbReference>
<dbReference type="RefSeq" id="WP_002294607.1">
    <property type="nucleotide sequence ID" value="NZ_WVTH01000009.1"/>
</dbReference>
<dbReference type="SMR" id="Q9X480"/>
<dbReference type="GeneID" id="66455280"/>
<dbReference type="GO" id="GO:0005886">
    <property type="term" value="C:plasma membrane"/>
    <property type="evidence" value="ECO:0007669"/>
    <property type="project" value="UniProtKB-SubCell"/>
</dbReference>
<dbReference type="GO" id="GO:0008236">
    <property type="term" value="F:serine-type peptidase activity"/>
    <property type="evidence" value="ECO:0007669"/>
    <property type="project" value="UniProtKB-KW"/>
</dbReference>
<dbReference type="GO" id="GO:0006508">
    <property type="term" value="P:proteolysis"/>
    <property type="evidence" value="ECO:0007669"/>
    <property type="project" value="UniProtKB-KW"/>
</dbReference>
<dbReference type="CDD" id="cd07023">
    <property type="entry name" value="S49_Sppa_N_C"/>
    <property type="match status" value="1"/>
</dbReference>
<dbReference type="Gene3D" id="3.90.226.10">
    <property type="entry name" value="2-enoyl-CoA Hydratase, Chain A, domain 1"/>
    <property type="match status" value="2"/>
</dbReference>
<dbReference type="InterPro" id="IPR029045">
    <property type="entry name" value="ClpP/crotonase-like_dom_sf"/>
</dbReference>
<dbReference type="InterPro" id="IPR004635">
    <property type="entry name" value="Pept_S49_SppA"/>
</dbReference>
<dbReference type="InterPro" id="IPR002142">
    <property type="entry name" value="Peptidase_S49"/>
</dbReference>
<dbReference type="InterPro" id="IPR047272">
    <property type="entry name" value="S49_SppA_C"/>
</dbReference>
<dbReference type="NCBIfam" id="TIGR00706">
    <property type="entry name" value="SppA_dom"/>
    <property type="match status" value="1"/>
</dbReference>
<dbReference type="PANTHER" id="PTHR42987">
    <property type="entry name" value="PEPTIDASE S49"/>
    <property type="match status" value="1"/>
</dbReference>
<dbReference type="PANTHER" id="PTHR42987:SF7">
    <property type="entry name" value="SIGNAL PEPTIDE PEPTIDASE SPPA-RELATED"/>
    <property type="match status" value="1"/>
</dbReference>
<dbReference type="Pfam" id="PF01343">
    <property type="entry name" value="Peptidase_S49"/>
    <property type="match status" value="1"/>
</dbReference>
<dbReference type="SUPFAM" id="SSF52096">
    <property type="entry name" value="ClpP/crotonase"/>
    <property type="match status" value="1"/>
</dbReference>
<protein>
    <recommendedName>
        <fullName>Putative signal peptide peptidase SppA</fullName>
        <ecNumber>3.4.21.-</ecNumber>
    </recommendedName>
</protein>
<comment type="function">
    <text evidence="1">Digestion of the cleaved signal peptides.</text>
</comment>
<comment type="subcellular location">
    <subcellularLocation>
        <location evidence="3">Cell membrane</location>
        <topology evidence="3">Single-pass membrane protein</topology>
    </subcellularLocation>
</comment>
<comment type="similarity">
    <text evidence="3">Belongs to the peptidase S49 family.</text>
</comment>